<proteinExistence type="inferred from homology"/>
<sequence>MSNNFDHTMQFDFSKNKEDLTKSILTDVYNSLKEKGYNPVNQLVGYLISGDPTYITNYNGARALVRKLERDEILEEVIKSYLEIK</sequence>
<name>Y2032_CLOP1</name>
<comment type="similarity">
    <text evidence="1">Belongs to the UPF0297 family.</text>
</comment>
<evidence type="ECO:0000255" key="1">
    <source>
        <dbReference type="HAMAP-Rule" id="MF_01507"/>
    </source>
</evidence>
<organism>
    <name type="scientific">Clostridium perfringens (strain ATCC 13124 / DSM 756 / JCM 1290 / NCIMB 6125 / NCTC 8237 / Type A)</name>
    <dbReference type="NCBI Taxonomy" id="195103"/>
    <lineage>
        <taxon>Bacteria</taxon>
        <taxon>Bacillati</taxon>
        <taxon>Bacillota</taxon>
        <taxon>Clostridia</taxon>
        <taxon>Eubacteriales</taxon>
        <taxon>Clostridiaceae</taxon>
        <taxon>Clostridium</taxon>
    </lineage>
</organism>
<feature type="chain" id="PRO_0000260068" description="UPF0297 protein CPF_2032">
    <location>
        <begin position="1"/>
        <end position="85"/>
    </location>
</feature>
<reference key="1">
    <citation type="journal article" date="2006" name="Genome Res.">
        <title>Skewed genomic variability in strains of the toxigenic bacterial pathogen, Clostridium perfringens.</title>
        <authorList>
            <person name="Myers G.S.A."/>
            <person name="Rasko D.A."/>
            <person name="Cheung J.K."/>
            <person name="Ravel J."/>
            <person name="Seshadri R."/>
            <person name="DeBoy R.T."/>
            <person name="Ren Q."/>
            <person name="Varga J."/>
            <person name="Awad M.M."/>
            <person name="Brinkac L.M."/>
            <person name="Daugherty S.C."/>
            <person name="Haft D.H."/>
            <person name="Dodson R.J."/>
            <person name="Madupu R."/>
            <person name="Nelson W.C."/>
            <person name="Rosovitz M.J."/>
            <person name="Sullivan S.A."/>
            <person name="Khouri H."/>
            <person name="Dimitrov G.I."/>
            <person name="Watkins K.L."/>
            <person name="Mulligan S."/>
            <person name="Benton J."/>
            <person name="Radune D."/>
            <person name="Fisher D.J."/>
            <person name="Atkins H.S."/>
            <person name="Hiscox T."/>
            <person name="Jost B.H."/>
            <person name="Billington S.J."/>
            <person name="Songer J.G."/>
            <person name="McClane B.A."/>
            <person name="Titball R.W."/>
            <person name="Rood J.I."/>
            <person name="Melville S.B."/>
            <person name="Paulsen I.T."/>
        </authorList>
    </citation>
    <scope>NUCLEOTIDE SEQUENCE [LARGE SCALE GENOMIC DNA]</scope>
    <source>
        <strain>ATCC 13124 / DSM 756 / JCM 1290 / NCIMB 6125 / NCTC 8237 / S 107 / Type A</strain>
    </source>
</reference>
<protein>
    <recommendedName>
        <fullName evidence="1">UPF0297 protein CPF_2032</fullName>
    </recommendedName>
</protein>
<accession>Q0TPH5</accession>
<dbReference type="EMBL" id="CP000246">
    <property type="protein sequence ID" value="ABG83347.1"/>
    <property type="molecule type" value="Genomic_DNA"/>
</dbReference>
<dbReference type="RefSeq" id="WP_003451703.1">
    <property type="nucleotide sequence ID" value="NC_008261.1"/>
</dbReference>
<dbReference type="SMR" id="Q0TPH5"/>
<dbReference type="STRING" id="195103.CPF_2032"/>
<dbReference type="PaxDb" id="195103-CPF_2032"/>
<dbReference type="KEGG" id="cpf:CPF_2032"/>
<dbReference type="eggNOG" id="COG4472">
    <property type="taxonomic scope" value="Bacteria"/>
</dbReference>
<dbReference type="HOGENOM" id="CLU_162466_0_0_9"/>
<dbReference type="Proteomes" id="UP000001823">
    <property type="component" value="Chromosome"/>
</dbReference>
<dbReference type="HAMAP" id="MF_01507">
    <property type="entry name" value="UPF0297"/>
    <property type="match status" value="1"/>
</dbReference>
<dbReference type="InterPro" id="IPR009309">
    <property type="entry name" value="IreB"/>
</dbReference>
<dbReference type="NCBIfam" id="NF003997">
    <property type="entry name" value="PRK05473.1"/>
    <property type="match status" value="1"/>
</dbReference>
<dbReference type="PANTHER" id="PTHR40067">
    <property type="entry name" value="UPF0297 PROTEIN YRZL"/>
    <property type="match status" value="1"/>
</dbReference>
<dbReference type="PANTHER" id="PTHR40067:SF1">
    <property type="entry name" value="UPF0297 PROTEIN YRZL"/>
    <property type="match status" value="1"/>
</dbReference>
<dbReference type="Pfam" id="PF06135">
    <property type="entry name" value="IreB"/>
    <property type="match status" value="1"/>
</dbReference>
<dbReference type="PIRSF" id="PIRSF037258">
    <property type="entry name" value="DUF965_bac"/>
    <property type="match status" value="1"/>
</dbReference>
<gene>
    <name type="ordered locus">CPF_2032</name>
</gene>